<name>HHT4_AVESA</name>
<dbReference type="EC" id="2.3.1.302" evidence="2"/>
<dbReference type="EMBL" id="MH397064">
    <property type="protein sequence ID" value="QDC27803.1"/>
    <property type="molecule type" value="mRNA"/>
</dbReference>
<dbReference type="SMR" id="A0A4Y5UJ70"/>
<dbReference type="KEGG" id="ag:QDC27803"/>
<dbReference type="BioCyc" id="MetaCyc:MONOMER-21254"/>
<dbReference type="BRENDA" id="2.3.1.302">
    <property type="organism ID" value="588"/>
</dbReference>
<dbReference type="GO" id="GO:0016747">
    <property type="term" value="F:acyltransferase activity, transferring groups other than amino-acyl groups"/>
    <property type="evidence" value="ECO:0007669"/>
    <property type="project" value="UniProtKB-ARBA"/>
</dbReference>
<dbReference type="GO" id="GO:0006952">
    <property type="term" value="P:defense response"/>
    <property type="evidence" value="ECO:0007669"/>
    <property type="project" value="UniProtKB-KW"/>
</dbReference>
<dbReference type="FunFam" id="3.30.559.10:FF:000015">
    <property type="entry name" value="Spermidine hydroxycinnamoyl transferase"/>
    <property type="match status" value="1"/>
</dbReference>
<dbReference type="FunFam" id="3.30.559.10:FF:000008">
    <property type="entry name" value="Tryptamine hydroxycinnamoyl transferase"/>
    <property type="match status" value="1"/>
</dbReference>
<dbReference type="Gene3D" id="3.30.559.10">
    <property type="entry name" value="Chloramphenicol acetyltransferase-like domain"/>
    <property type="match status" value="2"/>
</dbReference>
<dbReference type="InterPro" id="IPR023213">
    <property type="entry name" value="CAT-like_dom_sf"/>
</dbReference>
<dbReference type="InterPro" id="IPR050317">
    <property type="entry name" value="Plant_Fungal_Acyltransferase"/>
</dbReference>
<dbReference type="PANTHER" id="PTHR31642:SF11">
    <property type="entry name" value="SHIKIMATE O-HYDROXYCINNAMOYLTRANSFERASE"/>
    <property type="match status" value="1"/>
</dbReference>
<dbReference type="PANTHER" id="PTHR31642">
    <property type="entry name" value="TRICHOTHECENE 3-O-ACETYLTRANSFERASE"/>
    <property type="match status" value="1"/>
</dbReference>
<dbReference type="Pfam" id="PF02458">
    <property type="entry name" value="Transferase"/>
    <property type="match status" value="1"/>
</dbReference>
<dbReference type="SUPFAM" id="SSF52777">
    <property type="entry name" value="CoA-dependent acyltransferases"/>
    <property type="match status" value="1"/>
</dbReference>
<feature type="chain" id="PRO_0000454972" description="Hydroxycinnamoyl-CoA:5-hydroxyanthranilate N-hydroxycinnamoyltransferase HHT4">
    <location>
        <begin position="1"/>
        <end position="445"/>
    </location>
</feature>
<reference key="1">
    <citation type="journal article" date="2019" name="Metabolites">
        <title>The biosynthetic pathway of major avenanthramides in oat.</title>
        <authorList>
            <person name="Li Z."/>
            <person name="Chen Y."/>
            <person name="Meesapyodsuk D."/>
            <person name="Qiu X."/>
        </authorList>
    </citation>
    <scope>NUCLEOTIDE SEQUENCE [MRNA]</scope>
    <scope>FUNCTION</scope>
    <scope>CATALYTIC ACTIVITY</scope>
</reference>
<reference key="2">
    <citation type="journal article" date="2004" name="Mol. Plant Microbe Interact.">
        <title>Analysis of the involvement of hydroxyanthranilate hydroxycinnamoyltransferase and caffeoyl-CoA 3-O-methyltransferase in phytoalexin biosynthesis in oat.</title>
        <authorList>
            <person name="Yang Q."/>
            <person name="Trinh H.X."/>
            <person name="Imai S."/>
            <person name="Ishihara A."/>
            <person name="Zhang L."/>
            <person name="Nakayashiki H."/>
            <person name="Tosa Y."/>
            <person name="Mayama S."/>
        </authorList>
    </citation>
    <scope>INDUCTION</scope>
</reference>
<evidence type="ECO:0000269" key="1">
    <source>
    </source>
</evidence>
<evidence type="ECO:0000269" key="2">
    <source>
    </source>
</evidence>
<evidence type="ECO:0000303" key="3">
    <source>
    </source>
</evidence>
<evidence type="ECO:0000305" key="4"/>
<sequence length="445" mass="48217">MAITVRRSTMVRPAAERPRERLWNSNLDLVVPRFHTPSVYFYRRPDAGAGAGPGAAEGFFDAERMRRALAEALVPFYPMAGRLARDEDGRVEIDCSGEGVLFVEARAPGAAVDDYGDFAPTMELKRLIPAVDYSGDISSFPLLVLQVTYFKCGGVSLGVGMQHHVADGMSGLHFINSWSDLCRGAQIAVMPFIDRTLLRARDPPTPSYTHVEYQPAPAMLSSAPQALTGKPTLAPTAVDIFKLTRSELGRLRAQLPTGEGAPRFSTYAVLAAHVWRCVSLARGLPAEQPTKLYCATDGRHRLQPPLPEGYFGNVIFTATPLAEAGKVTGAVADGAAVIQGALDRMSDDYCRSALDYLETQPDLSALVRGAHTFRCPNLGLTSWVRLPIHDADFGWGRPVFMGPGGIAYEGLAFVLPSANKDGSLSIAISLQAEHMEKFRKLIADV</sequence>
<organism>
    <name type="scientific">Avena sativa</name>
    <name type="common">Oat</name>
    <dbReference type="NCBI Taxonomy" id="4498"/>
    <lineage>
        <taxon>Eukaryota</taxon>
        <taxon>Viridiplantae</taxon>
        <taxon>Streptophyta</taxon>
        <taxon>Embryophyta</taxon>
        <taxon>Tracheophyta</taxon>
        <taxon>Spermatophyta</taxon>
        <taxon>Magnoliopsida</taxon>
        <taxon>Liliopsida</taxon>
        <taxon>Poales</taxon>
        <taxon>Poaceae</taxon>
        <taxon>BOP clade</taxon>
        <taxon>Pooideae</taxon>
        <taxon>Poodae</taxon>
        <taxon>Poeae</taxon>
        <taxon>Poeae Chloroplast Group 1 (Aveneae type)</taxon>
        <taxon>Aveninae</taxon>
        <taxon>Avena</taxon>
    </lineage>
</organism>
<proteinExistence type="evidence at protein level"/>
<comment type="function">
    <text evidence="2">Involved in the biosynthesis of avenanthramide phytoalexins, which are phenolic alkaloids found mainly in oats (PubMed:31394723). Catalyzes the N-acylation of 5-hydroxyanthranilate with 4-coumaroyl-CoA or caffeoyl-CoA as acyl donors, forming avenanthramide A and avenanthramide C, respectively (PubMed:31394723). Does not accept feruloyl-CoA as a substrate (PubMed:31394723).</text>
</comment>
<comment type="catalytic activity">
    <reaction evidence="2">
        <text>5-hydroxyanthranilate + (E)-4-coumaroyl-CoA = avenanthramide A + CoA</text>
        <dbReference type="Rhea" id="RHEA:66932"/>
        <dbReference type="ChEBI" id="CHEBI:57287"/>
        <dbReference type="ChEBI" id="CHEBI:85008"/>
        <dbReference type="ChEBI" id="CHEBI:167463"/>
        <dbReference type="ChEBI" id="CHEBI:167464"/>
        <dbReference type="EC" id="2.3.1.302"/>
    </reaction>
    <physiologicalReaction direction="left-to-right" evidence="2">
        <dbReference type="Rhea" id="RHEA:66933"/>
    </physiologicalReaction>
</comment>
<comment type="catalytic activity">
    <reaction evidence="2">
        <text>5-hydroxyanthranilate + (E)-caffeoyl-CoA = avenanthramide C + CoA</text>
        <dbReference type="Rhea" id="RHEA:66936"/>
        <dbReference type="ChEBI" id="CHEBI:57287"/>
        <dbReference type="ChEBI" id="CHEBI:87136"/>
        <dbReference type="ChEBI" id="CHEBI:167463"/>
        <dbReference type="ChEBI" id="CHEBI:167577"/>
        <dbReference type="EC" id="2.3.1.302"/>
    </reaction>
    <physiologicalReaction direction="left-to-right" evidence="2">
        <dbReference type="Rhea" id="RHEA:66937"/>
    </physiologicalReaction>
</comment>
<comment type="induction">
    <text evidence="1">Induced by the crown rust fungus Puccinia coronata.</text>
</comment>
<comment type="similarity">
    <text evidence="4">Belongs to the plant acyltransferase family.</text>
</comment>
<accession>A0A4Y5UJ70</accession>
<gene>
    <name evidence="3" type="primary">HHT4</name>
</gene>
<keyword id="KW-0012">Acyltransferase</keyword>
<keyword id="KW-0611">Plant defense</keyword>
<keyword id="KW-0808">Transferase</keyword>
<protein>
    <recommendedName>
        <fullName evidence="4">Hydroxycinnamoyl-CoA:5-hydroxyanthranilate N-hydroxycinnamoyltransferase HHT4</fullName>
        <ecNumber evidence="2">2.3.1.302</ecNumber>
    </recommendedName>
    <alternativeName>
        <fullName evidence="3">Hydroxyanthranilate hydroxycinnamoyltransferase 4</fullName>
        <shortName evidence="3">AsHHT4</shortName>
    </alternativeName>
</protein>